<protein>
    <recommendedName>
        <fullName evidence="2">2-oxoglutarate and iron-dependent oxygenase JMJD4</fullName>
        <ecNumber>1.14.11.-</ecNumber>
    </recommendedName>
    <alternativeName>
        <fullName>JmjC domain-containing protein 4</fullName>
    </alternativeName>
    <alternativeName>
        <fullName>Jumonji domain-containing protein 4</fullName>
    </alternativeName>
    <alternativeName>
        <fullName evidence="2">Lysyl-hydroxylase JMJD4</fullName>
    </alternativeName>
</protein>
<sequence>MDRATFACSTAFFHDYSSSAQGTFSTGHVDFIDKIESFTYSDFFRDYLIPNQPCVFSEKFTDGWGSRRNWVTWGGKPDFDHLLQEFGEAIVPVANCDVKEYNSNPKEQLPFKEYISYWKEYIKNGYRSSRGCLYLKDWHLSRAFPEQDVYTTPVYFSSDWLNEYWDAIAVDDYRFVYMGPKGSWTPFHADVFRSYSWSANICGRKKWLLYPPGQEDYLKDCHGNLPFDVTAPGLQDRSVYPRYNQSQPPVEIVQEAGEIVFIPSGWHHQVYNLEDTISINHNWVNGCNVAIMWCFLQDELAAVQREINEWKDPMDDWHLQCQLIMKSCTGIDYKEFYNFLKVIAENRISILENGLDDEASAKNTPKAAISTLGMLHAVFDLKRTVKVLTSLSANEDFKKLDLTSLSPPQEALLHHLKAAIDTALL</sequence>
<feature type="chain" id="PRO_0000291961" description="2-oxoglutarate and iron-dependent oxygenase JMJD4">
    <location>
        <begin position="1"/>
        <end position="425"/>
    </location>
</feature>
<feature type="domain" description="JmjC" evidence="3">
    <location>
        <begin position="141"/>
        <end position="300"/>
    </location>
</feature>
<feature type="binding site" evidence="1">
    <location>
        <position position="188"/>
    </location>
    <ligand>
        <name>Fe cation</name>
        <dbReference type="ChEBI" id="CHEBI:24875"/>
        <note>catalytic</note>
    </ligand>
</feature>
<feature type="binding site" evidence="1">
    <location>
        <position position="190"/>
    </location>
    <ligand>
        <name>Fe cation</name>
        <dbReference type="ChEBI" id="CHEBI:24875"/>
        <note>catalytic</note>
    </ligand>
</feature>
<feature type="binding site" evidence="1">
    <location>
        <position position="268"/>
    </location>
    <ligand>
        <name>Fe cation</name>
        <dbReference type="ChEBI" id="CHEBI:24875"/>
        <note>catalytic</note>
    </ligand>
</feature>
<reference key="1">
    <citation type="journal article" date="2005" name="Genome Biol.">
        <title>Full-length cDNAs from chicken bursal lymphocytes to facilitate gene function analysis.</title>
        <authorList>
            <person name="Caldwell R.B."/>
            <person name="Kierzek A.M."/>
            <person name="Arakawa H."/>
            <person name="Bezzubov Y."/>
            <person name="Zaim J."/>
            <person name="Fiedler P."/>
            <person name="Kutter S."/>
            <person name="Blagodatski A."/>
            <person name="Kostovska D."/>
            <person name="Koter M."/>
            <person name="Plachy J."/>
            <person name="Carninci P."/>
            <person name="Hayashizaki Y."/>
            <person name="Buerstedde J.-M."/>
        </authorList>
    </citation>
    <scope>NUCLEOTIDE SEQUENCE [LARGE SCALE MRNA]</scope>
    <source>
        <strain>CB</strain>
        <tissue>Bursa of Fabricius</tissue>
    </source>
</reference>
<name>JMJD4_CHICK</name>
<keyword id="KW-0963">Cytoplasm</keyword>
<keyword id="KW-0223">Dioxygenase</keyword>
<keyword id="KW-0408">Iron</keyword>
<keyword id="KW-0479">Metal-binding</keyword>
<keyword id="KW-0560">Oxidoreductase</keyword>
<keyword id="KW-1185">Reference proteome</keyword>
<dbReference type="EC" id="1.14.11.-"/>
<dbReference type="EMBL" id="AJ721029">
    <property type="protein sequence ID" value="CAG32688.1"/>
    <property type="molecule type" value="mRNA"/>
</dbReference>
<dbReference type="RefSeq" id="NP_001026130.1">
    <property type="nucleotide sequence ID" value="NM_001030959.1"/>
</dbReference>
<dbReference type="SMR" id="Q5ZHV5"/>
<dbReference type="FunCoup" id="Q5ZHV5">
    <property type="interactions" value="2177"/>
</dbReference>
<dbReference type="STRING" id="9031.ENSGALP00000008687"/>
<dbReference type="PaxDb" id="9031-ENSGALP00000008687"/>
<dbReference type="GeneID" id="420400"/>
<dbReference type="KEGG" id="gga:420400"/>
<dbReference type="CTD" id="65094"/>
<dbReference type="VEuPathDB" id="HostDB:geneid_420400"/>
<dbReference type="eggNOG" id="KOG2131">
    <property type="taxonomic scope" value="Eukaryota"/>
</dbReference>
<dbReference type="InParanoid" id="Q5ZHV5"/>
<dbReference type="OrthoDB" id="203487at2759"/>
<dbReference type="PhylomeDB" id="Q5ZHV5"/>
<dbReference type="PRO" id="PR:Q5ZHV5"/>
<dbReference type="Proteomes" id="UP000000539">
    <property type="component" value="Unassembled WGS sequence"/>
</dbReference>
<dbReference type="GO" id="GO:0005737">
    <property type="term" value="C:cytoplasm"/>
    <property type="evidence" value="ECO:0000250"/>
    <property type="project" value="UniProtKB"/>
</dbReference>
<dbReference type="GO" id="GO:0005634">
    <property type="term" value="C:nucleus"/>
    <property type="evidence" value="ECO:0000318"/>
    <property type="project" value="GO_Central"/>
</dbReference>
<dbReference type="GO" id="GO:0016706">
    <property type="term" value="F:2-oxoglutarate-dependent dioxygenase activity"/>
    <property type="evidence" value="ECO:0000250"/>
    <property type="project" value="UniProtKB"/>
</dbReference>
<dbReference type="GO" id="GO:0046872">
    <property type="term" value="F:metal ion binding"/>
    <property type="evidence" value="ECO:0007669"/>
    <property type="project" value="UniProtKB-KW"/>
</dbReference>
<dbReference type="GO" id="GO:0106156">
    <property type="term" value="F:peptidyl-lysine 4-dioxygenase activity"/>
    <property type="evidence" value="ECO:0007669"/>
    <property type="project" value="RHEA"/>
</dbReference>
<dbReference type="GO" id="GO:0043565">
    <property type="term" value="F:sequence-specific DNA binding"/>
    <property type="evidence" value="ECO:0000318"/>
    <property type="project" value="GO_Central"/>
</dbReference>
<dbReference type="GO" id="GO:0045905">
    <property type="term" value="P:positive regulation of translational termination"/>
    <property type="evidence" value="ECO:0000250"/>
    <property type="project" value="UniProtKB"/>
</dbReference>
<dbReference type="GO" id="GO:0018126">
    <property type="term" value="P:protein hydroxylation"/>
    <property type="evidence" value="ECO:0000250"/>
    <property type="project" value="UniProtKB"/>
</dbReference>
<dbReference type="CDD" id="cd02208">
    <property type="entry name" value="cupin_RmlC-like"/>
    <property type="match status" value="1"/>
</dbReference>
<dbReference type="FunFam" id="2.60.120.650:FF:000030">
    <property type="entry name" value="JmjC domain-containing protein 4"/>
    <property type="match status" value="1"/>
</dbReference>
<dbReference type="Gene3D" id="2.60.120.650">
    <property type="entry name" value="Cupin"/>
    <property type="match status" value="1"/>
</dbReference>
<dbReference type="InterPro" id="IPR041667">
    <property type="entry name" value="Cupin_8"/>
</dbReference>
<dbReference type="InterPro" id="IPR003347">
    <property type="entry name" value="JmjC_dom"/>
</dbReference>
<dbReference type="InterPro" id="IPR050910">
    <property type="entry name" value="JMJD6_ArgDemeth/LysHydrox"/>
</dbReference>
<dbReference type="PANTHER" id="PTHR12480:SF6">
    <property type="entry name" value="2-OXOGLUTARATE AND IRON-DEPENDENT OXYGENASE JMJD4"/>
    <property type="match status" value="1"/>
</dbReference>
<dbReference type="PANTHER" id="PTHR12480">
    <property type="entry name" value="ARGININE DEMETHYLASE AND LYSYL-HYDROXYLASE JMJD"/>
    <property type="match status" value="1"/>
</dbReference>
<dbReference type="Pfam" id="PF13621">
    <property type="entry name" value="Cupin_8"/>
    <property type="match status" value="1"/>
</dbReference>
<dbReference type="SMART" id="SM00558">
    <property type="entry name" value="JmjC"/>
    <property type="match status" value="1"/>
</dbReference>
<dbReference type="SUPFAM" id="SSF51197">
    <property type="entry name" value="Clavaminate synthase-like"/>
    <property type="match status" value="1"/>
</dbReference>
<dbReference type="PROSITE" id="PS51184">
    <property type="entry name" value="JMJC"/>
    <property type="match status" value="1"/>
</dbReference>
<accession>Q5ZHV5</accession>
<evidence type="ECO:0000250" key="1">
    <source>
        <dbReference type="UniProtKB" id="Q6NYC1"/>
    </source>
</evidence>
<evidence type="ECO:0000250" key="2">
    <source>
        <dbReference type="UniProtKB" id="Q9H9V9"/>
    </source>
</evidence>
<evidence type="ECO:0000255" key="3">
    <source>
        <dbReference type="PROSITE-ProRule" id="PRU00538"/>
    </source>
</evidence>
<evidence type="ECO:0000305" key="4"/>
<gene>
    <name type="primary">JMJD4</name>
    <name type="ORF">RCJMB04_32n10</name>
</gene>
<proteinExistence type="evidence at transcript level"/>
<organism>
    <name type="scientific">Gallus gallus</name>
    <name type="common">Chicken</name>
    <dbReference type="NCBI Taxonomy" id="9031"/>
    <lineage>
        <taxon>Eukaryota</taxon>
        <taxon>Metazoa</taxon>
        <taxon>Chordata</taxon>
        <taxon>Craniata</taxon>
        <taxon>Vertebrata</taxon>
        <taxon>Euteleostomi</taxon>
        <taxon>Archelosauria</taxon>
        <taxon>Archosauria</taxon>
        <taxon>Dinosauria</taxon>
        <taxon>Saurischia</taxon>
        <taxon>Theropoda</taxon>
        <taxon>Coelurosauria</taxon>
        <taxon>Aves</taxon>
        <taxon>Neognathae</taxon>
        <taxon>Galloanserae</taxon>
        <taxon>Galliformes</taxon>
        <taxon>Phasianidae</taxon>
        <taxon>Phasianinae</taxon>
        <taxon>Gallus</taxon>
    </lineage>
</organism>
<comment type="function">
    <text evidence="2">Catalyzes the 2-oxoglutarate and iron-dependent C4-lysyl hydroxylation of ETF1 at 'Lys-63' thereby promoting the translational termination efficiency of ETF1.</text>
</comment>
<comment type="catalytic activity">
    <reaction evidence="2">
        <text>L-lysyl-[protein] + 2-oxoglutarate + O2 = 4-hydroxy-L-lysyl-[protein] + succinate + CO2</text>
        <dbReference type="Rhea" id="RHEA:57156"/>
        <dbReference type="Rhea" id="RHEA-COMP:9752"/>
        <dbReference type="Rhea" id="RHEA-COMP:15084"/>
        <dbReference type="ChEBI" id="CHEBI:15379"/>
        <dbReference type="ChEBI" id="CHEBI:16526"/>
        <dbReference type="ChEBI" id="CHEBI:16810"/>
        <dbReference type="ChEBI" id="CHEBI:29969"/>
        <dbReference type="ChEBI" id="CHEBI:30031"/>
        <dbReference type="ChEBI" id="CHEBI:141495"/>
    </reaction>
</comment>
<comment type="cofactor">
    <cofactor evidence="2">
        <name>Fe(2+)</name>
        <dbReference type="ChEBI" id="CHEBI:29033"/>
    </cofactor>
</comment>
<comment type="subcellular location">
    <subcellularLocation>
        <location evidence="2">Cytoplasm</location>
    </subcellularLocation>
</comment>
<comment type="similarity">
    <text evidence="4">Belongs to the JMJD6 family.</text>
</comment>